<keyword id="KW-0067">ATP-binding</keyword>
<keyword id="KW-0963">Cytoplasm</keyword>
<keyword id="KW-0418">Kinase</keyword>
<keyword id="KW-0460">Magnesium</keyword>
<keyword id="KW-0479">Metal-binding</keyword>
<keyword id="KW-0546">Nucleotide metabolism</keyword>
<keyword id="KW-0547">Nucleotide-binding</keyword>
<keyword id="KW-0597">Phosphoprotein</keyword>
<keyword id="KW-0808">Transferase</keyword>
<sequence>MERTLTILKPDCVRKQLIGAVTDKIERAGFRIVAMKKTRLTKETAGAFYAVHKERPFYGELVEFMSSGPCVPMILEKENAVADFRTLIGATDPAEAAEGTVRKLYADSKGENIVHGSDSAENAAIEGAFFFAAEEVVRVD</sequence>
<reference key="1">
    <citation type="submission" date="2008-06" db="EMBL/GenBank/DDBJ databases">
        <title>Complete sequence of Chlorobaculum parvum NCIB 8327.</title>
        <authorList>
            <consortium name="US DOE Joint Genome Institute"/>
            <person name="Lucas S."/>
            <person name="Copeland A."/>
            <person name="Lapidus A."/>
            <person name="Glavina del Rio T."/>
            <person name="Dalin E."/>
            <person name="Tice H."/>
            <person name="Bruce D."/>
            <person name="Goodwin L."/>
            <person name="Pitluck S."/>
            <person name="Schmutz J."/>
            <person name="Larimer F."/>
            <person name="Land M."/>
            <person name="Hauser L."/>
            <person name="Kyrpides N."/>
            <person name="Mikhailova N."/>
            <person name="Zhao F."/>
            <person name="Li T."/>
            <person name="Liu Z."/>
            <person name="Overmann J."/>
            <person name="Bryant D.A."/>
            <person name="Richardson P."/>
        </authorList>
    </citation>
    <scope>NUCLEOTIDE SEQUENCE [LARGE SCALE GENOMIC DNA]</scope>
    <source>
        <strain>DSM 263 / NCIMB 8327</strain>
    </source>
</reference>
<proteinExistence type="inferred from homology"/>
<organism>
    <name type="scientific">Chlorobaculum parvum (strain DSM 263 / NCIMB 8327)</name>
    <name type="common">Chlorobium vibrioforme subsp. thiosulfatophilum</name>
    <dbReference type="NCBI Taxonomy" id="517417"/>
    <lineage>
        <taxon>Bacteria</taxon>
        <taxon>Pseudomonadati</taxon>
        <taxon>Chlorobiota</taxon>
        <taxon>Chlorobiia</taxon>
        <taxon>Chlorobiales</taxon>
        <taxon>Chlorobiaceae</taxon>
        <taxon>Chlorobaculum</taxon>
    </lineage>
</organism>
<protein>
    <recommendedName>
        <fullName evidence="1">Nucleoside diphosphate kinase</fullName>
        <shortName evidence="1">NDK</shortName>
        <shortName evidence="1">NDP kinase</shortName>
        <ecNumber evidence="1">2.7.4.6</ecNumber>
    </recommendedName>
    <alternativeName>
        <fullName evidence="1">Nucleoside-2-P kinase</fullName>
    </alternativeName>
</protein>
<dbReference type="EC" id="2.7.4.6" evidence="1"/>
<dbReference type="EMBL" id="CP001099">
    <property type="protein sequence ID" value="ACF10663.1"/>
    <property type="molecule type" value="Genomic_DNA"/>
</dbReference>
<dbReference type="RefSeq" id="WP_012501497.1">
    <property type="nucleotide sequence ID" value="NC_011027.1"/>
</dbReference>
<dbReference type="SMR" id="B3QR32"/>
<dbReference type="STRING" id="517417.Cpar_0236"/>
<dbReference type="KEGG" id="cpc:Cpar_0236"/>
<dbReference type="eggNOG" id="COG0105">
    <property type="taxonomic scope" value="Bacteria"/>
</dbReference>
<dbReference type="HOGENOM" id="CLU_060216_8_1_10"/>
<dbReference type="OrthoDB" id="9801161at2"/>
<dbReference type="Proteomes" id="UP000008811">
    <property type="component" value="Chromosome"/>
</dbReference>
<dbReference type="GO" id="GO:0005737">
    <property type="term" value="C:cytoplasm"/>
    <property type="evidence" value="ECO:0007669"/>
    <property type="project" value="UniProtKB-SubCell"/>
</dbReference>
<dbReference type="GO" id="GO:0005524">
    <property type="term" value="F:ATP binding"/>
    <property type="evidence" value="ECO:0007669"/>
    <property type="project" value="UniProtKB-UniRule"/>
</dbReference>
<dbReference type="GO" id="GO:0046872">
    <property type="term" value="F:metal ion binding"/>
    <property type="evidence" value="ECO:0007669"/>
    <property type="project" value="UniProtKB-KW"/>
</dbReference>
<dbReference type="GO" id="GO:0004550">
    <property type="term" value="F:nucleoside diphosphate kinase activity"/>
    <property type="evidence" value="ECO:0007669"/>
    <property type="project" value="UniProtKB-UniRule"/>
</dbReference>
<dbReference type="GO" id="GO:0006241">
    <property type="term" value="P:CTP biosynthetic process"/>
    <property type="evidence" value="ECO:0007669"/>
    <property type="project" value="UniProtKB-UniRule"/>
</dbReference>
<dbReference type="GO" id="GO:0006183">
    <property type="term" value="P:GTP biosynthetic process"/>
    <property type="evidence" value="ECO:0007669"/>
    <property type="project" value="UniProtKB-UniRule"/>
</dbReference>
<dbReference type="GO" id="GO:0006228">
    <property type="term" value="P:UTP biosynthetic process"/>
    <property type="evidence" value="ECO:0007669"/>
    <property type="project" value="UniProtKB-UniRule"/>
</dbReference>
<dbReference type="CDD" id="cd04413">
    <property type="entry name" value="NDPk_I"/>
    <property type="match status" value="1"/>
</dbReference>
<dbReference type="FunFam" id="3.30.70.141:FF:000003">
    <property type="entry name" value="Nucleoside diphosphate kinase"/>
    <property type="match status" value="1"/>
</dbReference>
<dbReference type="Gene3D" id="3.30.70.141">
    <property type="entry name" value="Nucleoside diphosphate kinase-like domain"/>
    <property type="match status" value="1"/>
</dbReference>
<dbReference type="HAMAP" id="MF_00451">
    <property type="entry name" value="NDP_kinase"/>
    <property type="match status" value="1"/>
</dbReference>
<dbReference type="InterPro" id="IPR034907">
    <property type="entry name" value="NDK-like_dom"/>
</dbReference>
<dbReference type="InterPro" id="IPR036850">
    <property type="entry name" value="NDK-like_dom_sf"/>
</dbReference>
<dbReference type="InterPro" id="IPR001564">
    <property type="entry name" value="Nucleoside_diP_kinase"/>
</dbReference>
<dbReference type="NCBIfam" id="NF001908">
    <property type="entry name" value="PRK00668.1"/>
    <property type="match status" value="1"/>
</dbReference>
<dbReference type="NCBIfam" id="NF011113">
    <property type="entry name" value="PRK14541.1"/>
    <property type="match status" value="1"/>
</dbReference>
<dbReference type="PANTHER" id="PTHR46161">
    <property type="entry name" value="NUCLEOSIDE DIPHOSPHATE KINASE"/>
    <property type="match status" value="1"/>
</dbReference>
<dbReference type="PANTHER" id="PTHR46161:SF3">
    <property type="entry name" value="NUCLEOSIDE DIPHOSPHATE KINASE DDB_G0292928-RELATED"/>
    <property type="match status" value="1"/>
</dbReference>
<dbReference type="Pfam" id="PF00334">
    <property type="entry name" value="NDK"/>
    <property type="match status" value="1"/>
</dbReference>
<dbReference type="PRINTS" id="PR01243">
    <property type="entry name" value="NUCDPKINASE"/>
</dbReference>
<dbReference type="SMART" id="SM00562">
    <property type="entry name" value="NDK"/>
    <property type="match status" value="1"/>
</dbReference>
<dbReference type="SUPFAM" id="SSF54919">
    <property type="entry name" value="Nucleoside diphosphate kinase, NDK"/>
    <property type="match status" value="1"/>
</dbReference>
<dbReference type="PROSITE" id="PS51374">
    <property type="entry name" value="NDPK_LIKE"/>
    <property type="match status" value="1"/>
</dbReference>
<accession>B3QR32</accession>
<feature type="chain" id="PRO_1000124944" description="Nucleoside diphosphate kinase">
    <location>
        <begin position="1"/>
        <end position="140"/>
    </location>
</feature>
<feature type="active site" description="Pros-phosphohistidine intermediate" evidence="1">
    <location>
        <position position="115"/>
    </location>
</feature>
<feature type="binding site" evidence="1">
    <location>
        <position position="9"/>
    </location>
    <ligand>
        <name>ATP</name>
        <dbReference type="ChEBI" id="CHEBI:30616"/>
    </ligand>
</feature>
<feature type="binding site" evidence="1">
    <location>
        <position position="57"/>
    </location>
    <ligand>
        <name>ATP</name>
        <dbReference type="ChEBI" id="CHEBI:30616"/>
    </ligand>
</feature>
<feature type="binding site" evidence="1">
    <location>
        <position position="85"/>
    </location>
    <ligand>
        <name>ATP</name>
        <dbReference type="ChEBI" id="CHEBI:30616"/>
    </ligand>
</feature>
<feature type="binding site" evidence="1">
    <location>
        <position position="91"/>
    </location>
    <ligand>
        <name>ATP</name>
        <dbReference type="ChEBI" id="CHEBI:30616"/>
    </ligand>
</feature>
<feature type="binding site" evidence="1">
    <location>
        <position position="102"/>
    </location>
    <ligand>
        <name>ATP</name>
        <dbReference type="ChEBI" id="CHEBI:30616"/>
    </ligand>
</feature>
<feature type="binding site" evidence="1">
    <location>
        <position position="112"/>
    </location>
    <ligand>
        <name>ATP</name>
        <dbReference type="ChEBI" id="CHEBI:30616"/>
    </ligand>
</feature>
<evidence type="ECO:0000255" key="1">
    <source>
        <dbReference type="HAMAP-Rule" id="MF_00451"/>
    </source>
</evidence>
<comment type="function">
    <text evidence="1">Major role in the synthesis of nucleoside triphosphates other than ATP. The ATP gamma phosphate is transferred to the NDP beta phosphate via a ping-pong mechanism, using a phosphorylated active-site intermediate.</text>
</comment>
<comment type="catalytic activity">
    <reaction evidence="1">
        <text>a 2'-deoxyribonucleoside 5'-diphosphate + ATP = a 2'-deoxyribonucleoside 5'-triphosphate + ADP</text>
        <dbReference type="Rhea" id="RHEA:44640"/>
        <dbReference type="ChEBI" id="CHEBI:30616"/>
        <dbReference type="ChEBI" id="CHEBI:61560"/>
        <dbReference type="ChEBI" id="CHEBI:73316"/>
        <dbReference type="ChEBI" id="CHEBI:456216"/>
        <dbReference type="EC" id="2.7.4.6"/>
    </reaction>
</comment>
<comment type="catalytic activity">
    <reaction evidence="1">
        <text>a ribonucleoside 5'-diphosphate + ATP = a ribonucleoside 5'-triphosphate + ADP</text>
        <dbReference type="Rhea" id="RHEA:18113"/>
        <dbReference type="ChEBI" id="CHEBI:30616"/>
        <dbReference type="ChEBI" id="CHEBI:57930"/>
        <dbReference type="ChEBI" id="CHEBI:61557"/>
        <dbReference type="ChEBI" id="CHEBI:456216"/>
        <dbReference type="EC" id="2.7.4.6"/>
    </reaction>
</comment>
<comment type="cofactor">
    <cofactor evidence="1">
        <name>Mg(2+)</name>
        <dbReference type="ChEBI" id="CHEBI:18420"/>
    </cofactor>
</comment>
<comment type="subunit">
    <text evidence="1">Homotetramer.</text>
</comment>
<comment type="subcellular location">
    <subcellularLocation>
        <location evidence="1">Cytoplasm</location>
    </subcellularLocation>
</comment>
<comment type="similarity">
    <text evidence="1">Belongs to the NDK family.</text>
</comment>
<name>NDK_CHLP8</name>
<gene>
    <name evidence="1" type="primary">ndk</name>
    <name type="ordered locus">Cpar_0236</name>
</gene>